<reference key="1">
    <citation type="journal article" date="2000" name="Mol. Microbiol.">
        <title>Salmonella SsrB activates a global regulon of horizontally acquired genes.</title>
        <authorList>
            <person name="Worley M.J."/>
            <person name="Ching K.H."/>
            <person name="Heffron F."/>
        </authorList>
    </citation>
    <scope>NUCLEOTIDE SEQUENCE [GENOMIC DNA]</scope>
    <source>
        <strain>ATCC 14028s / SGSG 2262</strain>
    </source>
</reference>
<reference key="2">
    <citation type="journal article" date="2000" name="Proc. Natl. Acad. Sci. U.S.A.">
        <title>A conserved amino acid sequence directing intracellular type III secretion by Salmonella typhimurium.</title>
        <authorList>
            <person name="Miao E.A."/>
            <person name="Miller S.I."/>
        </authorList>
    </citation>
    <scope>NUCLEOTIDE SEQUENCE [GENOMIC DNA]</scope>
    <scope>SUBCELLULAR LOCATION</scope>
    <scope>SECRETION VIA TYPE III SECRETION SYSTEM</scope>
    <source>
        <strain>ATCC 14028s / SGSG 2262</strain>
    </source>
</reference>
<reference key="3">
    <citation type="journal article" date="2001" name="Nature">
        <title>Complete genome sequence of Salmonella enterica serovar Typhimurium LT2.</title>
        <authorList>
            <person name="McClelland M."/>
            <person name="Sanderson K.E."/>
            <person name="Spieth J."/>
            <person name="Clifton S.W."/>
            <person name="Latreille P."/>
            <person name="Courtney L."/>
            <person name="Porwollik S."/>
            <person name="Ali J."/>
            <person name="Dante M."/>
            <person name="Du F."/>
            <person name="Hou S."/>
            <person name="Layman D."/>
            <person name="Leonard S."/>
            <person name="Nguyen C."/>
            <person name="Scott K."/>
            <person name="Holmes A."/>
            <person name="Grewal N."/>
            <person name="Mulvaney E."/>
            <person name="Ryan E."/>
            <person name="Sun H."/>
            <person name="Florea L."/>
            <person name="Miller W."/>
            <person name="Stoneking T."/>
            <person name="Nhan M."/>
            <person name="Waterston R."/>
            <person name="Wilson R.K."/>
        </authorList>
    </citation>
    <scope>NUCLEOTIDE SEQUENCE [LARGE SCALE GENOMIC DNA]</scope>
    <source>
        <strain>LT2 / SGSC1412 / ATCC 700720</strain>
    </source>
</reference>
<reference key="4">
    <citation type="journal article" date="2006" name="Proc. Natl. Acad. Sci. U.S.A.">
        <title>Salmonella typhimurium disseminates within its host by manipulating the motility of infected cells.</title>
        <authorList>
            <person name="Worley M.J."/>
            <person name="Nieman G.S."/>
            <person name="Geddes K."/>
            <person name="Heffron F."/>
        </authorList>
    </citation>
    <scope>FUNCTION</scope>
    <scope>INTERACTION WITH HOST TRIP6</scope>
    <source>
        <strain>ATCC 14028s / SGSG 2262</strain>
    </source>
</reference>
<reference key="5">
    <citation type="journal article" date="2009" name="PLoS Pathog.">
        <title>The Salmonella SPI2 effector SseI mediates long-term systemic infection by modulating host cell migration.</title>
        <authorList>
            <person name="McLaughlin L.M."/>
            <person name="Govoni G.R."/>
            <person name="Gerke C."/>
            <person name="Gopinath S."/>
            <person name="Peng K."/>
            <person name="Laidlaw G."/>
            <person name="Chien Y.H."/>
            <person name="Jeong H.W."/>
            <person name="Li Z."/>
            <person name="Brown M.D."/>
            <person name="Sacks D.B."/>
            <person name="Monack D."/>
        </authorList>
    </citation>
    <scope>FUNCTION</scope>
    <scope>INTERACTION WITH HOST IQGAP1</scope>
    <scope>SUBCELLULAR LOCATION</scope>
    <scope>MUTAGENESIS OF CYS-178; HIS-216 AND ASP-231</scope>
    <source>
        <strain>SL1344</strain>
    </source>
</reference>
<name>SSEI_SALTY</name>
<keyword id="KW-0002">3D-structure</keyword>
<keyword id="KW-1035">Host cytoplasm</keyword>
<keyword id="KW-1185">Reference proteome</keyword>
<keyword id="KW-0964">Secreted</keyword>
<keyword id="KW-0843">Virulence</keyword>
<dbReference type="EMBL" id="AF231470">
    <property type="protein sequence ID" value="AAF73990.2"/>
    <property type="molecule type" value="Genomic_DNA"/>
</dbReference>
<dbReference type="EMBL" id="AF236075">
    <property type="protein sequence ID" value="AAF82082.1"/>
    <property type="molecule type" value="Genomic_DNA"/>
</dbReference>
<dbReference type="EMBL" id="AE006468">
    <property type="protein sequence ID" value="AAL19985.1"/>
    <property type="molecule type" value="Genomic_DNA"/>
</dbReference>
<dbReference type="RefSeq" id="WP_001533476.1">
    <property type="nucleotide sequence ID" value="NC_003197.2"/>
</dbReference>
<dbReference type="PDB" id="4G29">
    <property type="method" value="X-ray"/>
    <property type="resolution" value="1.70 A"/>
    <property type="chains" value="A=137-322"/>
</dbReference>
<dbReference type="PDB" id="4G2B">
    <property type="method" value="X-ray"/>
    <property type="resolution" value="2.05 A"/>
    <property type="chains" value="A/B=137-322"/>
</dbReference>
<dbReference type="PDBsum" id="4G29"/>
<dbReference type="PDBsum" id="4G2B"/>
<dbReference type="SMR" id="Q8ZQ79"/>
<dbReference type="DIP" id="DIP-61315N"/>
<dbReference type="IntAct" id="Q8ZQ79">
    <property type="interactions" value="1"/>
</dbReference>
<dbReference type="STRING" id="99287.STM1051"/>
<dbReference type="PaxDb" id="99287-STM1051"/>
<dbReference type="PATRIC" id="fig|99287.12.peg.1115"/>
<dbReference type="HOGENOM" id="CLU_077951_0_0_6"/>
<dbReference type="BioCyc" id="SENT99287:STM1051-MONOMER"/>
<dbReference type="EvolutionaryTrace" id="Q8ZQ79"/>
<dbReference type="PHI-base" id="PHI:8363"/>
<dbReference type="PHI-base" id="PHI:9965"/>
<dbReference type="Proteomes" id="UP000001014">
    <property type="component" value="Chromosome"/>
</dbReference>
<dbReference type="GO" id="GO:0005576">
    <property type="term" value="C:extracellular region"/>
    <property type="evidence" value="ECO:0007669"/>
    <property type="project" value="UniProtKB-SubCell"/>
</dbReference>
<dbReference type="GO" id="GO:0030430">
    <property type="term" value="C:host cell cytoplasm"/>
    <property type="evidence" value="ECO:0007669"/>
    <property type="project" value="UniProtKB-SubCell"/>
</dbReference>
<dbReference type="FunFam" id="3.30.2440.10:FF:000001">
    <property type="entry name" value="SPI-2 type III secretion system effector SseI"/>
    <property type="match status" value="1"/>
</dbReference>
<dbReference type="Gene3D" id="3.30.2440.10">
    <property type="entry name" value="Secreted effector protein SifA"/>
    <property type="match status" value="1"/>
</dbReference>
<dbReference type="Gene3D" id="3.10.670.10">
    <property type="entry name" value="Secreted effector protein ssei"/>
    <property type="match status" value="1"/>
</dbReference>
<dbReference type="InterPro" id="IPR028907">
    <property type="entry name" value="Tox-PLDMTX_dom"/>
</dbReference>
<dbReference type="NCBIfam" id="NF011899">
    <property type="entry name" value="PRK15372.1"/>
    <property type="match status" value="1"/>
</dbReference>
<dbReference type="Pfam" id="PF15645">
    <property type="entry name" value="Tox-PLDMTX"/>
    <property type="match status" value="1"/>
</dbReference>
<accession>Q8ZQ79</accession>
<accession>Q9KIC1</accession>
<accession>Q9KIK1</accession>
<organism>
    <name type="scientific">Salmonella typhimurium (strain LT2 / SGSC1412 / ATCC 700720)</name>
    <dbReference type="NCBI Taxonomy" id="99287"/>
    <lineage>
        <taxon>Bacteria</taxon>
        <taxon>Pseudomonadati</taxon>
        <taxon>Pseudomonadota</taxon>
        <taxon>Gammaproteobacteria</taxon>
        <taxon>Enterobacterales</taxon>
        <taxon>Enterobacteriaceae</taxon>
        <taxon>Salmonella</taxon>
    </lineage>
</organism>
<proteinExistence type="evidence at protein level"/>
<evidence type="ECO:0000269" key="1">
    <source>
    </source>
</evidence>
<evidence type="ECO:0000269" key="2">
    <source>
    </source>
</evidence>
<evidence type="ECO:0000269" key="3">
    <source>
    </source>
</evidence>
<evidence type="ECO:0000305" key="4"/>
<evidence type="ECO:0007829" key="5">
    <source>
        <dbReference type="PDB" id="4G29"/>
    </source>
</evidence>
<gene>
    <name type="primary">sseI</name>
    <name type="synonym">srfH</name>
    <name type="ordered locus">STM1051</name>
</gene>
<protein>
    <recommendedName>
        <fullName>Secreted effector protein SseI</fullName>
    </recommendedName>
</protein>
<sequence>MPFHIGSGCLPAIISNRRIYRIAWSDTPPEMSSWEKMKEFFCSTHQAEALECIWTICHPPAGTTREDVVSRFELLRTLAYDGWEENIHSGLHGENYFCILDEDSQEILSVTLDDVGNYTVNCQGYSETHHLTMATEPGVERTDITYNLTSDIDAAAYLEELKQNPIINNKIMNPVGQCESLMTPVSNFMNEKGFDNIRYRGIFIWDKPTEEIPTNHFAVVGNKEGKDYVFDVSAHQFENRGMSNLNGPLILSADEWVCKYRMATRRKLIYYTDFSNSSIAANAYDALPRELESESMAGKVFVTSPRWFNTFKKQKYSLIGKM</sequence>
<feature type="chain" id="PRO_0000391491" description="Secreted effector protein SseI">
    <location>
        <begin position="1"/>
        <end position="322"/>
    </location>
</feature>
<feature type="mutagenesis site" description="Loss of activity. No change in IQGAP1 binding." evidence="3">
    <original>C</original>
    <variation>A</variation>
    <location>
        <position position="178"/>
    </location>
</feature>
<feature type="mutagenesis site" description="Does not affect regulation of macrophage migration." evidence="3">
    <original>H</original>
    <variation>A</variation>
    <location>
        <position position="216"/>
    </location>
</feature>
<feature type="mutagenesis site" description="Does not affect regulation of macrophage migration." evidence="3">
    <original>D</original>
    <variation>A</variation>
    <location>
        <position position="231"/>
    </location>
</feature>
<feature type="sequence conflict" description="In Ref. 1; AAF73990 and 2; AAF82082." evidence="4" ref="1 2">
    <original>D</original>
    <variation>G</variation>
    <location>
        <position position="103"/>
    </location>
</feature>
<feature type="turn" evidence="5">
    <location>
        <begin position="150"/>
        <end position="153"/>
    </location>
</feature>
<feature type="helix" evidence="5">
    <location>
        <begin position="154"/>
        <end position="162"/>
    </location>
</feature>
<feature type="helix" evidence="5">
    <location>
        <begin position="165"/>
        <end position="172"/>
    </location>
</feature>
<feature type="helix" evidence="5">
    <location>
        <begin position="178"/>
        <end position="191"/>
    </location>
</feature>
<feature type="strand" evidence="5">
    <location>
        <begin position="195"/>
        <end position="207"/>
    </location>
</feature>
<feature type="strand" evidence="5">
    <location>
        <begin position="214"/>
        <end position="223"/>
    </location>
</feature>
<feature type="strand" evidence="5">
    <location>
        <begin position="226"/>
        <end position="231"/>
    </location>
</feature>
<feature type="helix" evidence="5">
    <location>
        <begin position="234"/>
        <end position="237"/>
    </location>
</feature>
<feature type="turn" evidence="5">
    <location>
        <begin position="238"/>
        <end position="241"/>
    </location>
</feature>
<feature type="strand" evidence="5">
    <location>
        <begin position="249"/>
        <end position="252"/>
    </location>
</feature>
<feature type="helix" evidence="5">
    <location>
        <begin position="253"/>
        <end position="262"/>
    </location>
</feature>
<feature type="strand" evidence="5">
    <location>
        <begin position="268"/>
        <end position="276"/>
    </location>
</feature>
<feature type="helix" evidence="5">
    <location>
        <begin position="277"/>
        <end position="283"/>
    </location>
</feature>
<feature type="helix" evidence="5">
    <location>
        <begin position="291"/>
        <end position="293"/>
    </location>
</feature>
<feature type="strand" evidence="5">
    <location>
        <begin position="300"/>
        <end position="302"/>
    </location>
</feature>
<feature type="helix" evidence="5">
    <location>
        <begin position="306"/>
        <end position="312"/>
    </location>
</feature>
<comment type="function">
    <text evidence="2 3">Effector proteins function to alter host cell physiology and promote bacterial survival in host tissues. This protein is required to maintain a long-term chronic systemic infection in mice. It inhibits normal cell migration of primary macrophages and dendritic cells, by a mechanism that involves interaction with the host factor IQGAP1, an important regulator of the cytoskeleton and cell migration. Also accelerates the systemic spread of infection from the gastrointestinal tract to the bloodstream, probably by interacting with host TRIP6.</text>
</comment>
<comment type="subunit">
    <text evidence="2 3">Interacts with host IQGAP1 and host TRIP6 (thyroid receptor-interacting protein 6).</text>
</comment>
<comment type="subcellular location">
    <subcellularLocation>
        <location evidence="1">Secreted</location>
    </subcellularLocation>
    <subcellularLocation>
        <location evidence="1 3">Host cytoplasm</location>
    </subcellularLocation>
    <text evidence="1">Secreted via type III secretion system 2 (SPI-2 T3SS), and delivered into the host cytoplasm. Colocalizes with IQGAP1 and actin at the cell periphery.</text>
</comment>